<name>TIAS_IGNH4</name>
<comment type="function">
    <text evidence="1">ATP-dependent agmatine transferase that catalyzes the formation of 2-agmatinylcytidine (agm2C) at the wobble position (C34) of tRNA(Ile2), converting the codon specificity from AUG to AUA.</text>
</comment>
<comment type="catalytic activity">
    <reaction>
        <text>cytidine(34) in tRNA(Ile2) + agmatine + ATP + H2O = 2-agmatinylcytidine(34) in tRNA(Ile2) + AMP + 2 phosphate + 2 H(+)</text>
        <dbReference type="Rhea" id="RHEA:43608"/>
        <dbReference type="Rhea" id="RHEA-COMP:10625"/>
        <dbReference type="Rhea" id="RHEA-COMP:10626"/>
        <dbReference type="ChEBI" id="CHEBI:15377"/>
        <dbReference type="ChEBI" id="CHEBI:15378"/>
        <dbReference type="ChEBI" id="CHEBI:30616"/>
        <dbReference type="ChEBI" id="CHEBI:43474"/>
        <dbReference type="ChEBI" id="CHEBI:58145"/>
        <dbReference type="ChEBI" id="CHEBI:82748"/>
        <dbReference type="ChEBI" id="CHEBI:83545"/>
        <dbReference type="ChEBI" id="CHEBI:456215"/>
        <dbReference type="EC" id="6.3.4.22"/>
    </reaction>
</comment>
<comment type="subcellular location">
    <subcellularLocation>
        <location evidence="2">Cytoplasm</location>
    </subcellularLocation>
</comment>
<comment type="similarity">
    <text evidence="2">Belongs to the TiaS family.</text>
</comment>
<dbReference type="EC" id="6.3.4.22"/>
<dbReference type="EMBL" id="CP000816">
    <property type="protein sequence ID" value="ABU81492.1"/>
    <property type="molecule type" value="Genomic_DNA"/>
</dbReference>
<dbReference type="RefSeq" id="WP_011998344.1">
    <property type="nucleotide sequence ID" value="NC_009776.1"/>
</dbReference>
<dbReference type="SMR" id="A8A990"/>
<dbReference type="STRING" id="453591.Igni_0309"/>
<dbReference type="GeneID" id="5562757"/>
<dbReference type="KEGG" id="iho:Igni_0309"/>
<dbReference type="eggNOG" id="arCOG01115">
    <property type="taxonomic scope" value="Archaea"/>
</dbReference>
<dbReference type="HOGENOM" id="CLU_675459_0_0_2"/>
<dbReference type="OrthoDB" id="39189at2157"/>
<dbReference type="PhylomeDB" id="A8A990"/>
<dbReference type="Proteomes" id="UP000000262">
    <property type="component" value="Chromosome"/>
</dbReference>
<dbReference type="GO" id="GO:0005737">
    <property type="term" value="C:cytoplasm"/>
    <property type="evidence" value="ECO:0007669"/>
    <property type="project" value="UniProtKB-SubCell"/>
</dbReference>
<dbReference type="GO" id="GO:0005524">
    <property type="term" value="F:ATP binding"/>
    <property type="evidence" value="ECO:0007669"/>
    <property type="project" value="UniProtKB-KW"/>
</dbReference>
<dbReference type="GO" id="GO:0016879">
    <property type="term" value="F:ligase activity, forming carbon-nitrogen bonds"/>
    <property type="evidence" value="ECO:0007669"/>
    <property type="project" value="UniProtKB-UniRule"/>
</dbReference>
<dbReference type="GO" id="GO:0002101">
    <property type="term" value="P:tRNA wobble cytosine modification"/>
    <property type="evidence" value="ECO:0007669"/>
    <property type="project" value="UniProtKB-UniRule"/>
</dbReference>
<dbReference type="Gene3D" id="2.40.50.1010">
    <property type="match status" value="1"/>
</dbReference>
<dbReference type="Gene3D" id="3.30.70.2200">
    <property type="match status" value="1"/>
</dbReference>
<dbReference type="Gene3D" id="3.90.600.20">
    <property type="match status" value="1"/>
</dbReference>
<dbReference type="InterPro" id="IPR053870">
    <property type="entry name" value="TiaS-like_TCKD"/>
</dbReference>
<dbReference type="InterPro" id="IPR013696">
    <property type="entry name" value="TiaS_FLD"/>
</dbReference>
<dbReference type="InterPro" id="IPR024913">
    <property type="entry name" value="tRNA_Ile2__agm2C_synt"/>
</dbReference>
<dbReference type="PANTHER" id="PTHR40705:SF2">
    <property type="entry name" value="DUF1743 DOMAIN-CONTAINING PROTEIN"/>
    <property type="match status" value="1"/>
</dbReference>
<dbReference type="PANTHER" id="PTHR40705">
    <property type="entry name" value="TRNA(ILE2) 2-AGMATINYLCYTIDINE SYNTHETASE TIAS"/>
    <property type="match status" value="1"/>
</dbReference>
<dbReference type="Pfam" id="PF08489">
    <property type="entry name" value="TiaS_FLD"/>
    <property type="match status" value="1"/>
</dbReference>
<dbReference type="Pfam" id="PF22641">
    <property type="entry name" value="TiaS_TCKD"/>
    <property type="match status" value="1"/>
</dbReference>
<keyword id="KW-0067">ATP-binding</keyword>
<keyword id="KW-0963">Cytoplasm</keyword>
<keyword id="KW-0436">Ligase</keyword>
<keyword id="KW-0547">Nucleotide-binding</keyword>
<keyword id="KW-1185">Reference proteome</keyword>
<keyword id="KW-0819">tRNA processing</keyword>
<protein>
    <recommendedName>
        <fullName>tRNA(Ile2) 2-agmatinylcytidine synthetase TiaS</fullName>
        <shortName>tRNA(Ile2)-agm2C synthetase</shortName>
        <ecNumber>6.3.4.22</ecNumber>
    </recommendedName>
    <alternativeName>
        <fullName>tRNA(Ile2) agmatidine synthetase</fullName>
    </alternativeName>
</protein>
<proteinExistence type="inferred from homology"/>
<sequence>MIVALDSFDEPRSGCTTLTASLLALHLASKGFRMLDYPRLVRLNPAVPWKTRGNAAVALEFEGSAEELFEEAKAFLERAPGRGALAVGEEFPEVYPDAVEKVLDPDEVAKKFEGLWWGRKEALVGALAAGAAEGLNNFELLAYRLPQNLGRPRRCSFHPAYEALLELAYPSIHESSPEVVCPKGPDPVLLGIRGSHPPLMWAALQLFDGEPFWLATMFRTNQHSYEPSRRAEEYPYEFVQKEFEGSYEVRGEDVLFGDYVLFNETGITKIFKEMIGYENKVSVKLDVVVKPGSKGVAALRDLRALFWKRKAPKCPKCGGPMVSMGKKTLMRKCKKCGYKAEVLPKLEIKVFEGTVFPVQGRKLHLEGDYRSPPWPPEGRICEKPGCAIWVAHGFDHH</sequence>
<gene>
    <name type="primary">tiaS</name>
    <name type="ordered locus">Igni_0309</name>
</gene>
<organism>
    <name type="scientific">Ignicoccus hospitalis (strain KIN4/I / DSM 18386 / JCM 14125)</name>
    <dbReference type="NCBI Taxonomy" id="453591"/>
    <lineage>
        <taxon>Archaea</taxon>
        <taxon>Thermoproteota</taxon>
        <taxon>Thermoprotei</taxon>
        <taxon>Desulfurococcales</taxon>
        <taxon>Desulfurococcaceae</taxon>
        <taxon>Ignicoccus</taxon>
    </lineage>
</organism>
<evidence type="ECO:0000250" key="1"/>
<evidence type="ECO:0000305" key="2"/>
<accession>A8A990</accession>
<reference key="1">
    <citation type="journal article" date="2008" name="Genome Biol.">
        <title>A genomic analysis of the archaeal system Ignicoccus hospitalis-Nanoarchaeum equitans.</title>
        <authorList>
            <person name="Podar M."/>
            <person name="Anderson I."/>
            <person name="Makarova K.S."/>
            <person name="Elkins J.G."/>
            <person name="Ivanova N."/>
            <person name="Wall M.A."/>
            <person name="Lykidis A."/>
            <person name="Mavromatis K."/>
            <person name="Sun H."/>
            <person name="Hudson M.E."/>
            <person name="Chen W."/>
            <person name="Deciu C."/>
            <person name="Hutchison D."/>
            <person name="Eads J.R."/>
            <person name="Anderson A."/>
            <person name="Fernandes F."/>
            <person name="Szeto E."/>
            <person name="Lapidus A."/>
            <person name="Kyrpides N.C."/>
            <person name="Saier M.H. Jr."/>
            <person name="Richardson P.M."/>
            <person name="Rachel R."/>
            <person name="Huber H."/>
            <person name="Eisen J.A."/>
            <person name="Koonin E.V."/>
            <person name="Keller M."/>
            <person name="Stetter K.O."/>
        </authorList>
    </citation>
    <scope>NUCLEOTIDE SEQUENCE [LARGE SCALE GENOMIC DNA]</scope>
    <source>
        <strain>KIN4/I / DSM 18386 / JCM 14125</strain>
    </source>
</reference>
<feature type="chain" id="PRO_0000407293" description="tRNA(Ile2) 2-agmatinylcytidine synthetase TiaS">
    <location>
        <begin position="1"/>
        <end position="397"/>
    </location>
</feature>